<sequence>MQDLESLYQMVAARKANPKEGSYTDYLFTKGLDKILKKVGEETTEVIVAAKNEGTAELQYETADLLYHLMVLLVEQGLTYDDIKEELGKREGLMSDFKDRPEIKDL</sequence>
<organism>
    <name type="scientific">Limosilactobacillus fermentum (strain NBRC 3956 / LMG 18251)</name>
    <name type="common">Lactobacillus fermentum</name>
    <dbReference type="NCBI Taxonomy" id="334390"/>
    <lineage>
        <taxon>Bacteria</taxon>
        <taxon>Bacillati</taxon>
        <taxon>Bacillota</taxon>
        <taxon>Bacilli</taxon>
        <taxon>Lactobacillales</taxon>
        <taxon>Lactobacillaceae</taxon>
        <taxon>Limosilactobacillus</taxon>
    </lineage>
</organism>
<protein>
    <recommendedName>
        <fullName evidence="1">Phosphoribosyl-ATP pyrophosphatase</fullName>
        <shortName evidence="1">PRA-PH</shortName>
        <ecNumber evidence="1">3.6.1.31</ecNumber>
    </recommendedName>
</protein>
<dbReference type="EC" id="3.6.1.31" evidence="1"/>
<dbReference type="EMBL" id="AP008937">
    <property type="protein sequence ID" value="BAG27099.1"/>
    <property type="molecule type" value="Genomic_DNA"/>
</dbReference>
<dbReference type="RefSeq" id="WP_003681874.1">
    <property type="nucleotide sequence ID" value="NC_010610.1"/>
</dbReference>
<dbReference type="SMR" id="B2GBR7"/>
<dbReference type="KEGG" id="lfe:LAF_0763"/>
<dbReference type="eggNOG" id="COG0140">
    <property type="taxonomic scope" value="Bacteria"/>
</dbReference>
<dbReference type="HOGENOM" id="CLU_123337_0_0_9"/>
<dbReference type="UniPathway" id="UPA00031">
    <property type="reaction ID" value="UER00007"/>
</dbReference>
<dbReference type="Proteomes" id="UP000001697">
    <property type="component" value="Chromosome"/>
</dbReference>
<dbReference type="GO" id="GO:0005737">
    <property type="term" value="C:cytoplasm"/>
    <property type="evidence" value="ECO:0007669"/>
    <property type="project" value="UniProtKB-SubCell"/>
</dbReference>
<dbReference type="GO" id="GO:0005524">
    <property type="term" value="F:ATP binding"/>
    <property type="evidence" value="ECO:0007669"/>
    <property type="project" value="UniProtKB-KW"/>
</dbReference>
<dbReference type="GO" id="GO:0004636">
    <property type="term" value="F:phosphoribosyl-ATP diphosphatase activity"/>
    <property type="evidence" value="ECO:0007669"/>
    <property type="project" value="UniProtKB-UniRule"/>
</dbReference>
<dbReference type="GO" id="GO:0000105">
    <property type="term" value="P:L-histidine biosynthetic process"/>
    <property type="evidence" value="ECO:0007669"/>
    <property type="project" value="UniProtKB-UniRule"/>
</dbReference>
<dbReference type="CDD" id="cd11534">
    <property type="entry name" value="NTP-PPase_HisIE_like"/>
    <property type="match status" value="1"/>
</dbReference>
<dbReference type="FunFam" id="1.10.287.1080:FF:000002">
    <property type="entry name" value="Histidine biosynthesis bifunctional protein HisIE"/>
    <property type="match status" value="1"/>
</dbReference>
<dbReference type="Gene3D" id="1.10.287.1080">
    <property type="entry name" value="MazG-like"/>
    <property type="match status" value="1"/>
</dbReference>
<dbReference type="HAMAP" id="MF_01020">
    <property type="entry name" value="HisE"/>
    <property type="match status" value="1"/>
</dbReference>
<dbReference type="InterPro" id="IPR008179">
    <property type="entry name" value="HisE"/>
</dbReference>
<dbReference type="InterPro" id="IPR021130">
    <property type="entry name" value="PRib-ATP_PPHydrolase-like"/>
</dbReference>
<dbReference type="NCBIfam" id="TIGR03188">
    <property type="entry name" value="histidine_hisI"/>
    <property type="match status" value="1"/>
</dbReference>
<dbReference type="PANTHER" id="PTHR42945">
    <property type="entry name" value="HISTIDINE BIOSYNTHESIS BIFUNCTIONAL PROTEIN"/>
    <property type="match status" value="1"/>
</dbReference>
<dbReference type="PANTHER" id="PTHR42945:SF9">
    <property type="entry name" value="HISTIDINE BIOSYNTHESIS BIFUNCTIONAL PROTEIN HISIE"/>
    <property type="match status" value="1"/>
</dbReference>
<dbReference type="Pfam" id="PF01503">
    <property type="entry name" value="PRA-PH"/>
    <property type="match status" value="1"/>
</dbReference>
<dbReference type="SUPFAM" id="SSF101386">
    <property type="entry name" value="all-alpha NTP pyrophosphatases"/>
    <property type="match status" value="1"/>
</dbReference>
<feature type="chain" id="PRO_1000190378" description="Phosphoribosyl-ATP pyrophosphatase">
    <location>
        <begin position="1"/>
        <end position="106"/>
    </location>
</feature>
<comment type="catalytic activity">
    <reaction evidence="1">
        <text>1-(5-phospho-beta-D-ribosyl)-ATP + H2O = 1-(5-phospho-beta-D-ribosyl)-5'-AMP + diphosphate + H(+)</text>
        <dbReference type="Rhea" id="RHEA:22828"/>
        <dbReference type="ChEBI" id="CHEBI:15377"/>
        <dbReference type="ChEBI" id="CHEBI:15378"/>
        <dbReference type="ChEBI" id="CHEBI:33019"/>
        <dbReference type="ChEBI" id="CHEBI:59457"/>
        <dbReference type="ChEBI" id="CHEBI:73183"/>
        <dbReference type="EC" id="3.6.1.31"/>
    </reaction>
</comment>
<comment type="pathway">
    <text evidence="1">Amino-acid biosynthesis; L-histidine biosynthesis; L-histidine from 5-phospho-alpha-D-ribose 1-diphosphate: step 2/9.</text>
</comment>
<comment type="subcellular location">
    <subcellularLocation>
        <location evidence="1">Cytoplasm</location>
    </subcellularLocation>
</comment>
<comment type="similarity">
    <text evidence="1">Belongs to the PRA-PH family.</text>
</comment>
<accession>B2GBR7</accession>
<evidence type="ECO:0000255" key="1">
    <source>
        <dbReference type="HAMAP-Rule" id="MF_01020"/>
    </source>
</evidence>
<reference key="1">
    <citation type="journal article" date="2008" name="DNA Res.">
        <title>Comparative genome analysis of Lactobacillus reuteri and Lactobacillus fermentum reveal a genomic island for reuterin and cobalamin production.</title>
        <authorList>
            <person name="Morita H."/>
            <person name="Toh H."/>
            <person name="Fukuda S."/>
            <person name="Horikawa H."/>
            <person name="Oshima K."/>
            <person name="Suzuki T."/>
            <person name="Murakami M."/>
            <person name="Hisamatsu S."/>
            <person name="Kato Y."/>
            <person name="Takizawa T."/>
            <person name="Fukuoka H."/>
            <person name="Yoshimura T."/>
            <person name="Itoh K."/>
            <person name="O'Sullivan D.J."/>
            <person name="McKay L.L."/>
            <person name="Ohno H."/>
            <person name="Kikuchi J."/>
            <person name="Masaoka T."/>
            <person name="Hattori M."/>
        </authorList>
    </citation>
    <scope>NUCLEOTIDE SEQUENCE [LARGE SCALE GENOMIC DNA]</scope>
    <source>
        <strain>NBRC 3956 / LMG 18251</strain>
    </source>
</reference>
<name>HIS2_LIMF3</name>
<gene>
    <name evidence="1" type="primary">hisE</name>
    <name type="ordered locus">LAF_0763</name>
</gene>
<keyword id="KW-0028">Amino-acid biosynthesis</keyword>
<keyword id="KW-0067">ATP-binding</keyword>
<keyword id="KW-0963">Cytoplasm</keyword>
<keyword id="KW-0368">Histidine biosynthesis</keyword>
<keyword id="KW-0378">Hydrolase</keyword>
<keyword id="KW-0547">Nucleotide-binding</keyword>
<keyword id="KW-1185">Reference proteome</keyword>
<proteinExistence type="inferred from homology"/>